<dbReference type="EC" id="3.6.4.13"/>
<dbReference type="EMBL" id="AF118128">
    <property type="protein sequence ID" value="AAD13115.1"/>
    <property type="molecule type" value="mRNA"/>
</dbReference>
<dbReference type="EMBL" id="AY255786">
    <property type="protein sequence ID" value="AAP91685.1"/>
    <property type="molecule type" value="mRNA"/>
</dbReference>
<dbReference type="EMBL" id="AY255787">
    <property type="protein sequence ID" value="AAP91686.1"/>
    <property type="molecule type" value="mRNA"/>
</dbReference>
<dbReference type="EMBL" id="AC007080">
    <property type="protein sequence ID" value="AAD30177.1"/>
    <property type="molecule type" value="Genomic_DNA"/>
</dbReference>
<dbReference type="EMBL" id="AK088867">
    <property type="protein sequence ID" value="BAC40624.1"/>
    <property type="molecule type" value="mRNA"/>
</dbReference>
<dbReference type="EMBL" id="AK051034">
    <property type="protein sequence ID" value="BAC34505.1"/>
    <property type="molecule type" value="mRNA"/>
</dbReference>
<dbReference type="EMBL" id="BC011067">
    <property type="protein sequence ID" value="AAH11067.1"/>
    <property type="molecule type" value="mRNA"/>
</dbReference>
<dbReference type="EMBL" id="BC024859">
    <property type="protein sequence ID" value="AAH24859.1"/>
    <property type="molecule type" value="mRNA"/>
</dbReference>
<dbReference type="CCDS" id="CCDS28695.1"/>
<dbReference type="RefSeq" id="NP_001239386.1">
    <property type="nucleotide sequence ID" value="NM_001252457.1"/>
</dbReference>
<dbReference type="RefSeq" id="NP_062667.1">
    <property type="nucleotide sequence ID" value="NM_019693.3"/>
</dbReference>
<dbReference type="SMR" id="Q9Z1N5"/>
<dbReference type="BioGRID" id="207488">
    <property type="interactions" value="28"/>
</dbReference>
<dbReference type="FunCoup" id="Q9Z1N5">
    <property type="interactions" value="4165"/>
</dbReference>
<dbReference type="IntAct" id="Q9Z1N5">
    <property type="interactions" value="5"/>
</dbReference>
<dbReference type="MINT" id="Q9Z1N5"/>
<dbReference type="STRING" id="10090.ENSMUSP00000133428"/>
<dbReference type="GlyGen" id="Q9Z1N5">
    <property type="glycosylation" value="1 site, 1 O-linked glycan (1 site)"/>
</dbReference>
<dbReference type="iPTMnet" id="Q9Z1N5"/>
<dbReference type="PhosphoSitePlus" id="Q9Z1N5"/>
<dbReference type="SwissPalm" id="Q9Z1N5"/>
<dbReference type="jPOST" id="Q9Z1N5"/>
<dbReference type="PaxDb" id="10090-ENSMUSP00000134178"/>
<dbReference type="PeptideAtlas" id="Q9Z1N5"/>
<dbReference type="ProteomicsDB" id="275417"/>
<dbReference type="Pumba" id="Q9Z1N5"/>
<dbReference type="TopDownProteomics" id="Q9Z1N5"/>
<dbReference type="Antibodypedia" id="27068">
    <property type="antibodies" value="366 antibodies from 30 providers"/>
</dbReference>
<dbReference type="DNASU" id="53817"/>
<dbReference type="Ensembl" id="ENSMUST00000068056.12">
    <property type="protein sequence ID" value="ENSMUSP00000070682.6"/>
    <property type="gene ID" value="ENSMUSG00000019432.16"/>
</dbReference>
<dbReference type="Ensembl" id="ENSMUST00000172549.2">
    <property type="protein sequence ID" value="ENSMUSP00000134178.2"/>
    <property type="gene ID" value="ENSMUSG00000019432.16"/>
</dbReference>
<dbReference type="Ensembl" id="ENSMUST00000173731.8">
    <property type="protein sequence ID" value="ENSMUSP00000133428.2"/>
    <property type="gene ID" value="ENSMUSG00000019432.16"/>
</dbReference>
<dbReference type="GeneID" id="53817"/>
<dbReference type="KEGG" id="mmu:53817"/>
<dbReference type="UCSC" id="uc008cha.2">
    <property type="organism name" value="mouse"/>
</dbReference>
<dbReference type="AGR" id="MGI:99240"/>
<dbReference type="CTD" id="7919"/>
<dbReference type="MGI" id="MGI:99240">
    <property type="gene designation" value="Ddx39b"/>
</dbReference>
<dbReference type="VEuPathDB" id="HostDB:ENSMUSG00000019432"/>
<dbReference type="eggNOG" id="KOG0329">
    <property type="taxonomic scope" value="Eukaryota"/>
</dbReference>
<dbReference type="GeneTree" id="ENSGT00940000160110"/>
<dbReference type="HOGENOM" id="CLU_003041_1_0_1"/>
<dbReference type="InParanoid" id="Q9Z1N5"/>
<dbReference type="OMA" id="YAHVEPK"/>
<dbReference type="OrthoDB" id="196131at2759"/>
<dbReference type="PhylomeDB" id="Q9Z1N5"/>
<dbReference type="TreeFam" id="TF300442"/>
<dbReference type="Reactome" id="R-MMU-159236">
    <property type="pathway name" value="Transport of Mature mRNA derived from an Intron-Containing Transcript"/>
</dbReference>
<dbReference type="Reactome" id="R-MMU-72163">
    <property type="pathway name" value="mRNA Splicing - Major Pathway"/>
</dbReference>
<dbReference type="Reactome" id="R-MMU-72187">
    <property type="pathway name" value="mRNA 3'-end processing"/>
</dbReference>
<dbReference type="Reactome" id="R-MMU-73856">
    <property type="pathway name" value="RNA Polymerase II Transcription Termination"/>
</dbReference>
<dbReference type="Reactome" id="R-MMU-9013418">
    <property type="pathway name" value="RHOBTB2 GTPase cycle"/>
</dbReference>
<dbReference type="BioGRID-ORCS" id="53817">
    <property type="hits" value="27 hits in 82 CRISPR screens"/>
</dbReference>
<dbReference type="ChiTaRS" id="Ddx39b">
    <property type="organism name" value="mouse"/>
</dbReference>
<dbReference type="PRO" id="PR:Q9Z1N5"/>
<dbReference type="Proteomes" id="UP000000589">
    <property type="component" value="Chromosome 17"/>
</dbReference>
<dbReference type="RNAct" id="Q9Z1N5">
    <property type="molecule type" value="protein"/>
</dbReference>
<dbReference type="Bgee" id="ENSMUSG00000019432">
    <property type="expression patterns" value="Expressed in floor plate of midbrain and 253 other cell types or tissues"/>
</dbReference>
<dbReference type="ExpressionAtlas" id="Q9Z1N5">
    <property type="expression patterns" value="baseline and differential"/>
</dbReference>
<dbReference type="GO" id="GO:0005737">
    <property type="term" value="C:cytoplasm"/>
    <property type="evidence" value="ECO:0007669"/>
    <property type="project" value="UniProtKB-SubCell"/>
</dbReference>
<dbReference type="GO" id="GO:0016607">
    <property type="term" value="C:nuclear speck"/>
    <property type="evidence" value="ECO:0000314"/>
    <property type="project" value="MGI"/>
</dbReference>
<dbReference type="GO" id="GO:0005681">
    <property type="term" value="C:spliceosomal complex"/>
    <property type="evidence" value="ECO:0007669"/>
    <property type="project" value="UniProtKB-KW"/>
</dbReference>
<dbReference type="GO" id="GO:0000346">
    <property type="term" value="C:transcription export complex"/>
    <property type="evidence" value="ECO:0007669"/>
    <property type="project" value="Ensembl"/>
</dbReference>
<dbReference type="GO" id="GO:0005687">
    <property type="term" value="C:U4 snRNP"/>
    <property type="evidence" value="ECO:0007669"/>
    <property type="project" value="Ensembl"/>
</dbReference>
<dbReference type="GO" id="GO:0005688">
    <property type="term" value="C:U6 snRNP"/>
    <property type="evidence" value="ECO:0007669"/>
    <property type="project" value="Ensembl"/>
</dbReference>
<dbReference type="GO" id="GO:0005524">
    <property type="term" value="F:ATP binding"/>
    <property type="evidence" value="ECO:0007669"/>
    <property type="project" value="UniProtKB-KW"/>
</dbReference>
<dbReference type="GO" id="GO:0016887">
    <property type="term" value="F:ATP hydrolysis activity"/>
    <property type="evidence" value="ECO:0007669"/>
    <property type="project" value="RHEA"/>
</dbReference>
<dbReference type="GO" id="GO:0043008">
    <property type="term" value="F:ATP-dependent protein binding"/>
    <property type="evidence" value="ECO:0007669"/>
    <property type="project" value="Ensembl"/>
</dbReference>
<dbReference type="GO" id="GO:0042802">
    <property type="term" value="F:identical protein binding"/>
    <property type="evidence" value="ECO:0007669"/>
    <property type="project" value="Ensembl"/>
</dbReference>
<dbReference type="GO" id="GO:0003724">
    <property type="term" value="F:RNA helicase activity"/>
    <property type="evidence" value="ECO:0007669"/>
    <property type="project" value="UniProtKB-EC"/>
</dbReference>
<dbReference type="GO" id="GO:0030621">
    <property type="term" value="F:U4 snRNA binding"/>
    <property type="evidence" value="ECO:0007669"/>
    <property type="project" value="Ensembl"/>
</dbReference>
<dbReference type="GO" id="GO:0017070">
    <property type="term" value="F:U6 snRNA binding"/>
    <property type="evidence" value="ECO:0007669"/>
    <property type="project" value="Ensembl"/>
</dbReference>
<dbReference type="GO" id="GO:0006406">
    <property type="term" value="P:mRNA export from nucleus"/>
    <property type="evidence" value="ECO:0007669"/>
    <property type="project" value="Ensembl"/>
</dbReference>
<dbReference type="GO" id="GO:0000245">
    <property type="term" value="P:spliceosomal complex assembly"/>
    <property type="evidence" value="ECO:0007669"/>
    <property type="project" value="Ensembl"/>
</dbReference>
<dbReference type="CDD" id="cd17950">
    <property type="entry name" value="DEADc_DDX39"/>
    <property type="match status" value="1"/>
</dbReference>
<dbReference type="CDD" id="cd18787">
    <property type="entry name" value="SF2_C_DEAD"/>
    <property type="match status" value="1"/>
</dbReference>
<dbReference type="FunFam" id="3.40.50.300:FF:000111">
    <property type="entry name" value="DEAD-box ATP-dependent RNA helicase"/>
    <property type="match status" value="1"/>
</dbReference>
<dbReference type="FunFam" id="3.40.50.300:FF:000168">
    <property type="entry name" value="DEAD-box ATP-dependent RNA helicase 56-like"/>
    <property type="match status" value="1"/>
</dbReference>
<dbReference type="Gene3D" id="3.40.50.300">
    <property type="entry name" value="P-loop containing nucleotide triphosphate hydrolases"/>
    <property type="match status" value="2"/>
</dbReference>
<dbReference type="InterPro" id="IPR011545">
    <property type="entry name" value="DEAD/DEAH_box_helicase_dom"/>
</dbReference>
<dbReference type="InterPro" id="IPR014001">
    <property type="entry name" value="Helicase_ATP-bd"/>
</dbReference>
<dbReference type="InterPro" id="IPR001650">
    <property type="entry name" value="Helicase_C-like"/>
</dbReference>
<dbReference type="InterPro" id="IPR027417">
    <property type="entry name" value="P-loop_NTPase"/>
</dbReference>
<dbReference type="InterPro" id="IPR014014">
    <property type="entry name" value="RNA_helicase_DEAD_Q_motif"/>
</dbReference>
<dbReference type="PANTHER" id="PTHR47958">
    <property type="entry name" value="ATP-DEPENDENT RNA HELICASE DBP3"/>
    <property type="match status" value="1"/>
</dbReference>
<dbReference type="Pfam" id="PF00270">
    <property type="entry name" value="DEAD"/>
    <property type="match status" value="1"/>
</dbReference>
<dbReference type="Pfam" id="PF00271">
    <property type="entry name" value="Helicase_C"/>
    <property type="match status" value="1"/>
</dbReference>
<dbReference type="SMART" id="SM00487">
    <property type="entry name" value="DEXDc"/>
    <property type="match status" value="1"/>
</dbReference>
<dbReference type="SMART" id="SM00490">
    <property type="entry name" value="HELICc"/>
    <property type="match status" value="1"/>
</dbReference>
<dbReference type="SUPFAM" id="SSF52540">
    <property type="entry name" value="P-loop containing nucleoside triphosphate hydrolases"/>
    <property type="match status" value="1"/>
</dbReference>
<dbReference type="PROSITE" id="PS51192">
    <property type="entry name" value="HELICASE_ATP_BIND_1"/>
    <property type="match status" value="1"/>
</dbReference>
<dbReference type="PROSITE" id="PS51194">
    <property type="entry name" value="HELICASE_CTER"/>
    <property type="match status" value="1"/>
</dbReference>
<dbReference type="PROSITE" id="PS51195">
    <property type="entry name" value="Q_MOTIF"/>
    <property type="match status" value="1"/>
</dbReference>
<gene>
    <name type="primary">Ddx39b</name>
    <name type="synonym">Bat1</name>
    <name type="synonym">Bat1a</name>
    <name type="synonym">Uap56</name>
</gene>
<feature type="initiator methionine" description="Removed" evidence="2">
    <location>
        <position position="1"/>
    </location>
</feature>
<feature type="chain" id="PRO_0000055073" description="Spliceosome RNA helicase Ddx39b">
    <location>
        <begin position="2"/>
        <end position="428"/>
    </location>
</feature>
<feature type="domain" description="Helicase ATP-binding" evidence="3">
    <location>
        <begin position="76"/>
        <end position="249"/>
    </location>
</feature>
<feature type="domain" description="Helicase C-terminal" evidence="4">
    <location>
        <begin position="261"/>
        <end position="422"/>
    </location>
</feature>
<feature type="region of interest" description="Disordered" evidence="5">
    <location>
        <begin position="1"/>
        <end position="31"/>
    </location>
</feature>
<feature type="short sequence motif" description="Q motif">
    <location>
        <begin position="45"/>
        <end position="73"/>
    </location>
</feature>
<feature type="short sequence motif" description="DECD box">
    <location>
        <begin position="196"/>
        <end position="199"/>
    </location>
</feature>
<feature type="compositionally biased region" description="Acidic residues" evidence="5">
    <location>
        <begin position="1"/>
        <end position="19"/>
    </location>
</feature>
<feature type="binding site" evidence="3">
    <location>
        <begin position="89"/>
        <end position="96"/>
    </location>
    <ligand>
        <name>ATP</name>
        <dbReference type="ChEBI" id="CHEBI:30616"/>
    </ligand>
</feature>
<feature type="modified residue" description="N-acetylalanine" evidence="2">
    <location>
        <position position="2"/>
    </location>
</feature>
<feature type="modified residue" description="N6-acetyllysine; alternate" evidence="2">
    <location>
        <position position="36"/>
    </location>
</feature>
<feature type="modified residue" description="Phosphoserine" evidence="2">
    <location>
        <position position="38"/>
    </location>
</feature>
<feature type="modified residue" description="Phosphoserine" evidence="2">
    <location>
        <position position="41"/>
    </location>
</feature>
<feature type="modified residue" description="Phosphothreonine" evidence="2">
    <location>
        <position position="172"/>
    </location>
</feature>
<feature type="cross-link" description="Glycyl lysine isopeptide (Lys-Gly) (interchain with G-Cter in SUMO2); alternate" evidence="2">
    <location>
        <position position="36"/>
    </location>
</feature>
<name>DX39B_MOUSE</name>
<comment type="function">
    <text evidence="2">Involved in nuclear export of spliced and unspliced mRNA. Component of the TREX complex which is thought to couple mRNA transcription, processing and nuclear export, and specifically associates with spliced mRNA and not with unspliced pre-mRNA. The TREX complex is recruited to spliced mRNAs by a transcription-independent mechanism, binds to mRNA upstream of the exon-junction complex (EJC) and is recruited in a splicing- and cap-dependent manner to a region near the 5' end of the mRNA where it functions in mRNA export to the cytoplasm via the TAP/NXF1 pathway. The THOC1-THOC2-THOC3 core complex alone is sufficient to promote ATPase activity of DDX39B; in the complex THOC2 is the only component that directly interacts with DDX39B. Associates with SARNP/CIP29, which facilitates RNA binding of DDX39B and likely plays a role in mRNA export. May undergo several rounds of ATP hydrolysis during assembly of TREX to drive subsequent loading of components such as ALYREF/THOC4 and CHTOP onto mRNA. Also associates with pre-mRNA independent of ALYREF/THOC4. Involved in the nuclear export of intronless mRNA; the ATP-bound form is proposed to recruit export adapter ALYREF/THOC4 to intronless mRNA; its ATPase activity is cooperatively stimulated by RNA and ALYREF/THOC4 and ATP hydrolysis is thought to trigger the dissociation from RNA to allow the association of ALYREF/THOC4 and the NXF1-NXT1 heterodimer. Involved in transcription elongation and genome stability.</text>
</comment>
<comment type="function">
    <text evidence="2">Splice factor that is required for the first ATP-dependent step in spliceosome assembly and for the interaction of U2 snRNP with the branchpoint. Has both RNA-stimulated ATP binding/hydrolysis activity and ATP-dependent RNA unwinding activity. Even with the stimulation of RNA, the ATPase activity is weak. Can only hydrolyze ATP but not other NTPs. The RNA stimulation of ATPase activity does not have a strong preference for the sequence and length of the RNA. However, ssRNA stimulates the ATPase activity much more strongly than dsRNA. Can unwind 5' or 3' overhangs or blunt end RNA duplexes in vitro. The ATPase and helicase activities are not influenced by U2AF2; the effect of ALYREF/THOC4 is reported conflictingly.</text>
</comment>
<comment type="catalytic activity">
    <reaction evidence="2">
        <text>ATP + H2O = ADP + phosphate + H(+)</text>
        <dbReference type="Rhea" id="RHEA:13065"/>
        <dbReference type="ChEBI" id="CHEBI:15377"/>
        <dbReference type="ChEBI" id="CHEBI:15378"/>
        <dbReference type="ChEBI" id="CHEBI:30616"/>
        <dbReference type="ChEBI" id="CHEBI:43474"/>
        <dbReference type="ChEBI" id="CHEBI:456216"/>
        <dbReference type="EC" id="3.6.4.13"/>
    </reaction>
</comment>
<comment type="subunit">
    <text evidence="2">Homodimer, and heterodimer with DDX39A. DDX39B interacts with the THO subcomplex to form the THO-DDX39B complex which multimerizes into a 28-subunit tetrameric assembly. Component of the transcription/export (TREX) complex at least composed of ALYREF/THOC4, DDX39B, SARNP/CIP29, CHTOP and the THO subcomplex; in the complex interacts with THOC2. THOC1-THOC2-THOC3-DDX39B subcomplex is sufficient for the interaction with export factor NXF1-NXT1. TREX seems to have a dynamic structure involving ATP-dependent remodeling. Within the TREX complex bridges ALYREF/THOC4 and the THO subcomplex, and, in a ATP-dependent manner, ALYREF/THOC4 and SARNP/CIP29. Component of the spliceosome. Interacts directly with U2AF2. Interacts with RBM8A, RNPS1 and SRRM1, FYTTD1/UIF, THOC1, MX1 and POLDIP3. Interacts with LUZP4. Interacts with SARNP/CIP29 (via the C-terminal domain); the interaction is direct and facilitates RNA binding of DDX39B.</text>
</comment>
<comment type="subcellular location">
    <subcellularLocation>
        <location evidence="1">Nucleus</location>
    </subcellularLocation>
    <subcellularLocation>
        <location evidence="1">Nucleus speckle</location>
    </subcellularLocation>
    <subcellularLocation>
        <location evidence="1">Cytoplasm</location>
    </subcellularLocation>
    <text evidence="1">Can translocate to the cytoplasm in the presence of MX1.</text>
</comment>
<comment type="domain">
    <text evidence="1">The helicase C-terminal domain mediates interaction with ALYREF/THOC4.</text>
</comment>
<comment type="similarity">
    <text evidence="6">Belongs to the DEAD box helicase family. DECD subfamily.</text>
</comment>
<sequence>MAENDVDNELLDYEDDEVETAAGADGTEAPAKKDVKGSYVSIHSSGFRDFLLKPELLRAIVDCGFEHPSEVQHECIPQAILGMDVLCQAKSGMGKTAVFVLATLQQLEPVTGQVSVLVMCHTRELAFQISKEYERFSKYMPNVKVAVFFGGLSIKKDEEVLKKNCPHIVVGTPGRILALARNKSLNLKHIKHFILDECDKMLEQLDMRRDVQEIFRMTPHEKQVMMFSATLSKEIRPVCRKFMQDPMEIFVDDETKLTLHGLQQYYVKLKDNEKNRKLFDLLDVLEFNQVVIFVKSVQRCIALAQLLVEQNFPAIAIHRGMPQEERLSRYQQFKDFQRRILVATNLFGRGMDIERVNIAFNYDMPEDSDTYLHRVARAGRFGTKGLAITFVSDENDAKILNDVQDRFEVNISELPDEIDISSYIEQTR</sequence>
<evidence type="ECO:0000250" key="1"/>
<evidence type="ECO:0000250" key="2">
    <source>
        <dbReference type="UniProtKB" id="Q13838"/>
    </source>
</evidence>
<evidence type="ECO:0000255" key="3">
    <source>
        <dbReference type="PROSITE-ProRule" id="PRU00541"/>
    </source>
</evidence>
<evidence type="ECO:0000255" key="4">
    <source>
        <dbReference type="PROSITE-ProRule" id="PRU00542"/>
    </source>
</evidence>
<evidence type="ECO:0000256" key="5">
    <source>
        <dbReference type="SAM" id="MobiDB-lite"/>
    </source>
</evidence>
<evidence type="ECO:0000305" key="6"/>
<reference key="1">
    <citation type="submission" date="1999-01" db="EMBL/GenBank/DDBJ databases">
        <title>Sequence analysis of a mouse homolog of the human BAT1 gene (nuclear RNA helicase of the DEAD box protein family).</title>
        <authorList>
            <person name="Handel-Fernandez M.E."/>
            <person name="Vincek V."/>
        </authorList>
    </citation>
    <scope>NUCLEOTIDE SEQUENCE [MRNA]</scope>
    <source>
        <strain>C57BL/10</strain>
    </source>
</reference>
<reference key="2">
    <citation type="submission" date="2003-03" db="EMBL/GenBank/DDBJ databases">
        <title>Characterization of murine Bat1, a putative immunoregulator of Tnfa.</title>
        <authorList>
            <person name="Dolecki K.J."/>
            <person name="Wong A.M.L."/>
            <person name="Price P."/>
        </authorList>
    </citation>
    <scope>NUCLEOTIDE SEQUENCE [MRNA]</scope>
    <source>
        <strain>BALB/cJ</strain>
        <strain>C57BL/10 X DBA/2</strain>
    </source>
</reference>
<reference key="3">
    <citation type="journal article" date="2003" name="Genome Res.">
        <title>Analysis of the gene-dense major histocompatibility complex class III region and its comparison to mouse.</title>
        <authorList>
            <person name="Xie T."/>
            <person name="Rowen L."/>
            <person name="Aguado B."/>
            <person name="Ahearn M.E."/>
            <person name="Madan A."/>
            <person name="Qin S."/>
            <person name="Campbell R.D."/>
            <person name="Hood L."/>
        </authorList>
    </citation>
    <scope>NUCLEOTIDE SEQUENCE [LARGE SCALE GENOMIC DNA]</scope>
    <source>
        <strain>129</strain>
    </source>
</reference>
<reference key="4">
    <citation type="journal article" date="2005" name="Science">
        <title>The transcriptional landscape of the mammalian genome.</title>
        <authorList>
            <person name="Carninci P."/>
            <person name="Kasukawa T."/>
            <person name="Katayama S."/>
            <person name="Gough J."/>
            <person name="Frith M.C."/>
            <person name="Maeda N."/>
            <person name="Oyama R."/>
            <person name="Ravasi T."/>
            <person name="Lenhard B."/>
            <person name="Wells C."/>
            <person name="Kodzius R."/>
            <person name="Shimokawa K."/>
            <person name="Bajic V.B."/>
            <person name="Brenner S.E."/>
            <person name="Batalov S."/>
            <person name="Forrest A.R."/>
            <person name="Zavolan M."/>
            <person name="Davis M.J."/>
            <person name="Wilming L.G."/>
            <person name="Aidinis V."/>
            <person name="Allen J.E."/>
            <person name="Ambesi-Impiombato A."/>
            <person name="Apweiler R."/>
            <person name="Aturaliya R.N."/>
            <person name="Bailey T.L."/>
            <person name="Bansal M."/>
            <person name="Baxter L."/>
            <person name="Beisel K.W."/>
            <person name="Bersano T."/>
            <person name="Bono H."/>
            <person name="Chalk A.M."/>
            <person name="Chiu K.P."/>
            <person name="Choudhary V."/>
            <person name="Christoffels A."/>
            <person name="Clutterbuck D.R."/>
            <person name="Crowe M.L."/>
            <person name="Dalla E."/>
            <person name="Dalrymple B.P."/>
            <person name="de Bono B."/>
            <person name="Della Gatta G."/>
            <person name="di Bernardo D."/>
            <person name="Down T."/>
            <person name="Engstrom P."/>
            <person name="Fagiolini M."/>
            <person name="Faulkner G."/>
            <person name="Fletcher C.F."/>
            <person name="Fukushima T."/>
            <person name="Furuno M."/>
            <person name="Futaki S."/>
            <person name="Gariboldi M."/>
            <person name="Georgii-Hemming P."/>
            <person name="Gingeras T.R."/>
            <person name="Gojobori T."/>
            <person name="Green R.E."/>
            <person name="Gustincich S."/>
            <person name="Harbers M."/>
            <person name="Hayashi Y."/>
            <person name="Hensch T.K."/>
            <person name="Hirokawa N."/>
            <person name="Hill D."/>
            <person name="Huminiecki L."/>
            <person name="Iacono M."/>
            <person name="Ikeo K."/>
            <person name="Iwama A."/>
            <person name="Ishikawa T."/>
            <person name="Jakt M."/>
            <person name="Kanapin A."/>
            <person name="Katoh M."/>
            <person name="Kawasawa Y."/>
            <person name="Kelso J."/>
            <person name="Kitamura H."/>
            <person name="Kitano H."/>
            <person name="Kollias G."/>
            <person name="Krishnan S.P."/>
            <person name="Kruger A."/>
            <person name="Kummerfeld S.K."/>
            <person name="Kurochkin I.V."/>
            <person name="Lareau L.F."/>
            <person name="Lazarevic D."/>
            <person name="Lipovich L."/>
            <person name="Liu J."/>
            <person name="Liuni S."/>
            <person name="McWilliam S."/>
            <person name="Madan Babu M."/>
            <person name="Madera M."/>
            <person name="Marchionni L."/>
            <person name="Matsuda H."/>
            <person name="Matsuzawa S."/>
            <person name="Miki H."/>
            <person name="Mignone F."/>
            <person name="Miyake S."/>
            <person name="Morris K."/>
            <person name="Mottagui-Tabar S."/>
            <person name="Mulder N."/>
            <person name="Nakano N."/>
            <person name="Nakauchi H."/>
            <person name="Ng P."/>
            <person name="Nilsson R."/>
            <person name="Nishiguchi S."/>
            <person name="Nishikawa S."/>
            <person name="Nori F."/>
            <person name="Ohara O."/>
            <person name="Okazaki Y."/>
            <person name="Orlando V."/>
            <person name="Pang K.C."/>
            <person name="Pavan W.J."/>
            <person name="Pavesi G."/>
            <person name="Pesole G."/>
            <person name="Petrovsky N."/>
            <person name="Piazza S."/>
            <person name="Reed J."/>
            <person name="Reid J.F."/>
            <person name="Ring B.Z."/>
            <person name="Ringwald M."/>
            <person name="Rost B."/>
            <person name="Ruan Y."/>
            <person name="Salzberg S.L."/>
            <person name="Sandelin A."/>
            <person name="Schneider C."/>
            <person name="Schoenbach C."/>
            <person name="Sekiguchi K."/>
            <person name="Semple C.A."/>
            <person name="Seno S."/>
            <person name="Sessa L."/>
            <person name="Sheng Y."/>
            <person name="Shibata Y."/>
            <person name="Shimada H."/>
            <person name="Shimada K."/>
            <person name="Silva D."/>
            <person name="Sinclair B."/>
            <person name="Sperling S."/>
            <person name="Stupka E."/>
            <person name="Sugiura K."/>
            <person name="Sultana R."/>
            <person name="Takenaka Y."/>
            <person name="Taki K."/>
            <person name="Tammoja K."/>
            <person name="Tan S.L."/>
            <person name="Tang S."/>
            <person name="Taylor M.S."/>
            <person name="Tegner J."/>
            <person name="Teichmann S.A."/>
            <person name="Ueda H.R."/>
            <person name="van Nimwegen E."/>
            <person name="Verardo R."/>
            <person name="Wei C.L."/>
            <person name="Yagi K."/>
            <person name="Yamanishi H."/>
            <person name="Zabarovsky E."/>
            <person name="Zhu S."/>
            <person name="Zimmer A."/>
            <person name="Hide W."/>
            <person name="Bult C."/>
            <person name="Grimmond S.M."/>
            <person name="Teasdale R.D."/>
            <person name="Liu E.T."/>
            <person name="Brusic V."/>
            <person name="Quackenbush J."/>
            <person name="Wahlestedt C."/>
            <person name="Mattick J.S."/>
            <person name="Hume D.A."/>
            <person name="Kai C."/>
            <person name="Sasaki D."/>
            <person name="Tomaru Y."/>
            <person name="Fukuda S."/>
            <person name="Kanamori-Katayama M."/>
            <person name="Suzuki M."/>
            <person name="Aoki J."/>
            <person name="Arakawa T."/>
            <person name="Iida J."/>
            <person name="Imamura K."/>
            <person name="Itoh M."/>
            <person name="Kato T."/>
            <person name="Kawaji H."/>
            <person name="Kawagashira N."/>
            <person name="Kawashima T."/>
            <person name="Kojima M."/>
            <person name="Kondo S."/>
            <person name="Konno H."/>
            <person name="Nakano K."/>
            <person name="Ninomiya N."/>
            <person name="Nishio T."/>
            <person name="Okada M."/>
            <person name="Plessy C."/>
            <person name="Shibata K."/>
            <person name="Shiraki T."/>
            <person name="Suzuki S."/>
            <person name="Tagami M."/>
            <person name="Waki K."/>
            <person name="Watahiki A."/>
            <person name="Okamura-Oho Y."/>
            <person name="Suzuki H."/>
            <person name="Kawai J."/>
            <person name="Hayashizaki Y."/>
        </authorList>
    </citation>
    <scope>NUCLEOTIDE SEQUENCE [LARGE SCALE MRNA]</scope>
    <source>
        <strain>C57BL/6J</strain>
        <strain>NOD</strain>
        <tissue>Embryo</tissue>
        <tissue>Thymus</tissue>
    </source>
</reference>
<reference key="5">
    <citation type="journal article" date="2004" name="Genome Res.">
        <title>The status, quality, and expansion of the NIH full-length cDNA project: the Mammalian Gene Collection (MGC).</title>
        <authorList>
            <consortium name="The MGC Project Team"/>
        </authorList>
    </citation>
    <scope>NUCLEOTIDE SEQUENCE [LARGE SCALE MRNA]</scope>
    <source>
        <strain>FVB/N</strain>
        <tissue>Eye</tissue>
        <tissue>Mammary tumor</tissue>
    </source>
</reference>
<reference key="6">
    <citation type="submission" date="2007-04" db="UniProtKB">
        <authorList>
            <person name="Lubec G."/>
            <person name="Kang S.U."/>
        </authorList>
    </citation>
    <scope>PROTEIN SEQUENCE OF 145-155</scope>
    <scope>IDENTIFICATION BY MASS SPECTROMETRY</scope>
    <source>
        <strain>C57BL/6J</strain>
        <tissue>Brain</tissue>
    </source>
</reference>
<reference key="7">
    <citation type="journal article" date="2010" name="Cell">
        <title>A tissue-specific atlas of mouse protein phosphorylation and expression.</title>
        <authorList>
            <person name="Huttlin E.L."/>
            <person name="Jedrychowski M.P."/>
            <person name="Elias J.E."/>
            <person name="Goswami T."/>
            <person name="Rad R."/>
            <person name="Beausoleil S.A."/>
            <person name="Villen J."/>
            <person name="Haas W."/>
            <person name="Sowa M.E."/>
            <person name="Gygi S.P."/>
        </authorList>
    </citation>
    <scope>IDENTIFICATION BY MASS SPECTROMETRY [LARGE SCALE ANALYSIS]</scope>
    <source>
        <tissue>Brain</tissue>
        <tissue>Brown adipose tissue</tissue>
        <tissue>Heart</tissue>
        <tissue>Kidney</tissue>
        <tissue>Liver</tissue>
        <tissue>Lung</tissue>
        <tissue>Pancreas</tissue>
        <tissue>Spleen</tissue>
        <tissue>Testis</tissue>
    </source>
</reference>
<protein>
    <recommendedName>
        <fullName>Spliceosome RNA helicase Ddx39b</fullName>
        <ecNumber>3.6.4.13</ecNumber>
    </recommendedName>
    <alternativeName>
        <fullName>56 kDa U2AF65-associated protein</fullName>
    </alternativeName>
    <alternativeName>
        <fullName>DEAD box protein UAP56</fullName>
    </alternativeName>
    <alternativeName>
        <fullName>HLA-B-associated transcript 1 protein</fullName>
    </alternativeName>
</protein>
<keyword id="KW-0007">Acetylation</keyword>
<keyword id="KW-0067">ATP-binding</keyword>
<keyword id="KW-0963">Cytoplasm</keyword>
<keyword id="KW-0903">Direct protein sequencing</keyword>
<keyword id="KW-0347">Helicase</keyword>
<keyword id="KW-0378">Hydrolase</keyword>
<keyword id="KW-1017">Isopeptide bond</keyword>
<keyword id="KW-0507">mRNA processing</keyword>
<keyword id="KW-0508">mRNA splicing</keyword>
<keyword id="KW-0509">mRNA transport</keyword>
<keyword id="KW-0547">Nucleotide-binding</keyword>
<keyword id="KW-0539">Nucleus</keyword>
<keyword id="KW-0597">Phosphoprotein</keyword>
<keyword id="KW-1185">Reference proteome</keyword>
<keyword id="KW-0694">RNA-binding</keyword>
<keyword id="KW-0747">Spliceosome</keyword>
<keyword id="KW-0813">Transport</keyword>
<keyword id="KW-0832">Ubl conjugation</keyword>
<organism>
    <name type="scientific">Mus musculus</name>
    <name type="common">Mouse</name>
    <dbReference type="NCBI Taxonomy" id="10090"/>
    <lineage>
        <taxon>Eukaryota</taxon>
        <taxon>Metazoa</taxon>
        <taxon>Chordata</taxon>
        <taxon>Craniata</taxon>
        <taxon>Vertebrata</taxon>
        <taxon>Euteleostomi</taxon>
        <taxon>Mammalia</taxon>
        <taxon>Eutheria</taxon>
        <taxon>Euarchontoglires</taxon>
        <taxon>Glires</taxon>
        <taxon>Rodentia</taxon>
        <taxon>Myomorpha</taxon>
        <taxon>Muroidea</taxon>
        <taxon>Muridae</taxon>
        <taxon>Murinae</taxon>
        <taxon>Mus</taxon>
        <taxon>Mus</taxon>
    </lineage>
</organism>
<proteinExistence type="evidence at protein level"/>
<accession>Q9Z1N5</accession>
<accession>Q8HW97</accession>